<evidence type="ECO:0000305" key="1"/>
<protein>
    <recommendedName>
        <fullName>Stromal 70 kDa heat shock-related protein, chloroplastic</fullName>
    </recommendedName>
</protein>
<sequence length="34" mass="3415">QKVVGIDLGTTNSAVAAMEGGKPTIVTNAEGQRT</sequence>
<dbReference type="SMR" id="P31082"/>
<dbReference type="Proteomes" id="UP000504608">
    <property type="component" value="Unplaced"/>
</dbReference>
<dbReference type="GO" id="GO:0009570">
    <property type="term" value="C:chloroplast stroma"/>
    <property type="evidence" value="ECO:0007669"/>
    <property type="project" value="UniProtKB-SubCell"/>
</dbReference>
<dbReference type="GO" id="GO:0005524">
    <property type="term" value="F:ATP binding"/>
    <property type="evidence" value="ECO:0007669"/>
    <property type="project" value="UniProtKB-KW"/>
</dbReference>
<dbReference type="GO" id="GO:0140662">
    <property type="term" value="F:ATP-dependent protein folding chaperone"/>
    <property type="evidence" value="ECO:0007669"/>
    <property type="project" value="InterPro"/>
</dbReference>
<dbReference type="Gene3D" id="3.30.420.40">
    <property type="match status" value="1"/>
</dbReference>
<dbReference type="InterPro" id="IPR043129">
    <property type="entry name" value="ATPase_NBD"/>
</dbReference>
<dbReference type="InterPro" id="IPR018181">
    <property type="entry name" value="Heat_shock_70_CS"/>
</dbReference>
<dbReference type="InterPro" id="IPR013126">
    <property type="entry name" value="Hsp_70_fam"/>
</dbReference>
<dbReference type="Pfam" id="PF00012">
    <property type="entry name" value="HSP70"/>
    <property type="match status" value="1"/>
</dbReference>
<dbReference type="SUPFAM" id="SSF53067">
    <property type="entry name" value="Actin-like ATPase domain"/>
    <property type="match status" value="1"/>
</dbReference>
<dbReference type="PROSITE" id="PS00297">
    <property type="entry name" value="HSP70_1"/>
    <property type="match status" value="1"/>
</dbReference>
<reference key="1">
    <citation type="journal article" date="1993" name="FEBS Lett.">
        <title>Interaction of homologues of Hsp70 and Cpn60 with ferredoxin-NADP+ reductase upon its import into chloroplasts.</title>
        <authorList>
            <person name="Tsugeki R."/>
            <person name="Nishimur M."/>
        </authorList>
    </citation>
    <scope>PROTEIN SEQUENCE</scope>
    <source>
        <strain>cv. Kurokawa Amakuri Nankin</strain>
        <tissue>Seed</tissue>
    </source>
</reference>
<keyword id="KW-0067">ATP-binding</keyword>
<keyword id="KW-0150">Chloroplast</keyword>
<keyword id="KW-0903">Direct protein sequencing</keyword>
<keyword id="KW-0547">Nucleotide-binding</keyword>
<keyword id="KW-0934">Plastid</keyword>
<keyword id="KW-1185">Reference proteome</keyword>
<keyword id="KW-0346">Stress response</keyword>
<feature type="chain" id="PRO_0000078357" description="Stromal 70 kDa heat shock-related protein, chloroplastic">
    <location>
        <begin position="1"/>
        <end position="34" status="greater than"/>
    </location>
</feature>
<feature type="non-terminal residue">
    <location>
        <position position="34"/>
    </location>
</feature>
<organism>
    <name type="scientific">Cucurbita maxima</name>
    <name type="common">Pumpkin</name>
    <name type="synonym">Winter squash</name>
    <dbReference type="NCBI Taxonomy" id="3661"/>
    <lineage>
        <taxon>Eukaryota</taxon>
        <taxon>Viridiplantae</taxon>
        <taxon>Streptophyta</taxon>
        <taxon>Embryophyta</taxon>
        <taxon>Tracheophyta</taxon>
        <taxon>Spermatophyta</taxon>
        <taxon>Magnoliopsida</taxon>
        <taxon>eudicotyledons</taxon>
        <taxon>Gunneridae</taxon>
        <taxon>Pentapetalae</taxon>
        <taxon>rosids</taxon>
        <taxon>fabids</taxon>
        <taxon>Cucurbitales</taxon>
        <taxon>Cucurbitaceae</taxon>
        <taxon>Cucurbiteae</taxon>
        <taxon>Cucurbita</taxon>
    </lineage>
</organism>
<accession>P31082</accession>
<proteinExistence type="evidence at protein level"/>
<name>HSP7S_CUCMA</name>
<comment type="function">
    <text>Interacts with newly imported chloroplast proteins to assist in their maturation.</text>
</comment>
<comment type="subcellular location">
    <subcellularLocation>
        <location>Plastid</location>
        <location>Chloroplast stroma</location>
    </subcellularLocation>
</comment>
<comment type="similarity">
    <text evidence="1">Belongs to the heat shock protein 70 family.</text>
</comment>